<dbReference type="EC" id="3.6.5.-" evidence="2"/>
<dbReference type="EMBL" id="X86080">
    <property type="protein sequence ID" value="CAA60035.1"/>
    <property type="molecule type" value="Genomic_DNA"/>
</dbReference>
<dbReference type="SMR" id="P49742"/>
<dbReference type="VEuPathDB" id="FungiDB:SCHCODRAFT_02498526"/>
<dbReference type="GO" id="GO:0005737">
    <property type="term" value="C:cytoplasm"/>
    <property type="evidence" value="ECO:0007669"/>
    <property type="project" value="UniProtKB-KW"/>
</dbReference>
<dbReference type="GO" id="GO:0005874">
    <property type="term" value="C:microtubule"/>
    <property type="evidence" value="ECO:0007669"/>
    <property type="project" value="UniProtKB-KW"/>
</dbReference>
<dbReference type="GO" id="GO:0005525">
    <property type="term" value="F:GTP binding"/>
    <property type="evidence" value="ECO:0007669"/>
    <property type="project" value="UniProtKB-KW"/>
</dbReference>
<dbReference type="GO" id="GO:0016787">
    <property type="term" value="F:hydrolase activity"/>
    <property type="evidence" value="ECO:0007669"/>
    <property type="project" value="UniProtKB-KW"/>
</dbReference>
<dbReference type="GO" id="GO:0046872">
    <property type="term" value="F:metal ion binding"/>
    <property type="evidence" value="ECO:0007669"/>
    <property type="project" value="UniProtKB-KW"/>
</dbReference>
<dbReference type="GO" id="GO:0005200">
    <property type="term" value="F:structural constituent of cytoskeleton"/>
    <property type="evidence" value="ECO:0007669"/>
    <property type="project" value="InterPro"/>
</dbReference>
<dbReference type="GO" id="GO:0007017">
    <property type="term" value="P:microtubule-based process"/>
    <property type="evidence" value="ECO:0007669"/>
    <property type="project" value="InterPro"/>
</dbReference>
<dbReference type="CDD" id="cd02186">
    <property type="entry name" value="alpha_tubulin"/>
    <property type="match status" value="1"/>
</dbReference>
<dbReference type="FunFam" id="1.10.287.600:FF:000005">
    <property type="entry name" value="Tubulin alpha chain"/>
    <property type="match status" value="1"/>
</dbReference>
<dbReference type="FunFam" id="3.30.1330.20:FF:000001">
    <property type="entry name" value="Tubulin alpha chain"/>
    <property type="match status" value="1"/>
</dbReference>
<dbReference type="FunFam" id="3.40.50.1440:FF:000008">
    <property type="entry name" value="Tubulin alpha chain"/>
    <property type="match status" value="1"/>
</dbReference>
<dbReference type="Gene3D" id="1.10.287.600">
    <property type="entry name" value="Helix hairpin bin"/>
    <property type="match status" value="1"/>
</dbReference>
<dbReference type="Gene3D" id="3.30.1330.20">
    <property type="entry name" value="Tubulin/FtsZ, C-terminal domain"/>
    <property type="match status" value="1"/>
</dbReference>
<dbReference type="Gene3D" id="3.40.50.1440">
    <property type="entry name" value="Tubulin/FtsZ, GTPase domain"/>
    <property type="match status" value="1"/>
</dbReference>
<dbReference type="InterPro" id="IPR002452">
    <property type="entry name" value="Alpha_tubulin"/>
</dbReference>
<dbReference type="InterPro" id="IPR008280">
    <property type="entry name" value="Tub_FtsZ_C"/>
</dbReference>
<dbReference type="InterPro" id="IPR000217">
    <property type="entry name" value="Tubulin"/>
</dbReference>
<dbReference type="InterPro" id="IPR037103">
    <property type="entry name" value="Tubulin/FtsZ-like_C"/>
</dbReference>
<dbReference type="InterPro" id="IPR018316">
    <property type="entry name" value="Tubulin/FtsZ_2-layer-sand-dom"/>
</dbReference>
<dbReference type="InterPro" id="IPR036525">
    <property type="entry name" value="Tubulin/FtsZ_GTPase_sf"/>
</dbReference>
<dbReference type="InterPro" id="IPR023123">
    <property type="entry name" value="Tubulin_C"/>
</dbReference>
<dbReference type="InterPro" id="IPR017975">
    <property type="entry name" value="Tubulin_CS"/>
</dbReference>
<dbReference type="InterPro" id="IPR003008">
    <property type="entry name" value="Tubulin_FtsZ_GTPase"/>
</dbReference>
<dbReference type="PANTHER" id="PTHR11588">
    <property type="entry name" value="TUBULIN"/>
    <property type="match status" value="1"/>
</dbReference>
<dbReference type="Pfam" id="PF00091">
    <property type="entry name" value="Tubulin"/>
    <property type="match status" value="1"/>
</dbReference>
<dbReference type="Pfam" id="PF03953">
    <property type="entry name" value="Tubulin_C"/>
    <property type="match status" value="1"/>
</dbReference>
<dbReference type="PRINTS" id="PR01162">
    <property type="entry name" value="ALPHATUBULIN"/>
</dbReference>
<dbReference type="PRINTS" id="PR01161">
    <property type="entry name" value="TUBULIN"/>
</dbReference>
<dbReference type="SMART" id="SM00864">
    <property type="entry name" value="Tubulin"/>
    <property type="match status" value="1"/>
</dbReference>
<dbReference type="SMART" id="SM00865">
    <property type="entry name" value="Tubulin_C"/>
    <property type="match status" value="1"/>
</dbReference>
<dbReference type="SUPFAM" id="SSF55307">
    <property type="entry name" value="Tubulin C-terminal domain-like"/>
    <property type="match status" value="1"/>
</dbReference>
<dbReference type="SUPFAM" id="SSF52490">
    <property type="entry name" value="Tubulin nucleotide-binding domain-like"/>
    <property type="match status" value="1"/>
</dbReference>
<dbReference type="PROSITE" id="PS00227">
    <property type="entry name" value="TUBULIN"/>
    <property type="match status" value="1"/>
</dbReference>
<protein>
    <recommendedName>
        <fullName>Tubulin alpha-1B chain</fullName>
        <ecNumber evidence="2">3.6.5.-</ecNumber>
    </recommendedName>
</protein>
<organism>
    <name type="scientific">Schizophyllum commune</name>
    <name type="common">Split gill fungus</name>
    <dbReference type="NCBI Taxonomy" id="5334"/>
    <lineage>
        <taxon>Eukaryota</taxon>
        <taxon>Fungi</taxon>
        <taxon>Dikarya</taxon>
        <taxon>Basidiomycota</taxon>
        <taxon>Agaricomycotina</taxon>
        <taxon>Agaricomycetes</taxon>
        <taxon>Agaricomycetidae</taxon>
        <taxon>Agaricales</taxon>
        <taxon>Schizophyllaceae</taxon>
        <taxon>Schizophyllum</taxon>
    </lineage>
</organism>
<accession>P49742</accession>
<reference key="1">
    <citation type="submission" date="1995-04" db="EMBL/GenBank/DDBJ databases">
        <authorList>
            <person name="Pukki H.K."/>
            <person name="Juuti J.T."/>
            <person name="Raudaskoski M."/>
        </authorList>
    </citation>
    <scope>NUCLEOTIDE SEQUENCE [GENOMIC DNA]</scope>
    <source>
        <strain>ATCC 44201 / CBS 340.81 / UVM 4-40 / 4-40</strain>
    </source>
</reference>
<comment type="function">
    <text>Tubulin is the major constituent of microtubules, a cylinder consisting of laterally associated linear protofilaments composed of alpha- and beta-tubulin heterodimers. Microtubules grow by the addition of GTP-tubulin dimers to the microtubule end, where a stabilizing cap forms. Below the cap, tubulin dimers are in GDP-bound state, owing to GTPase activity of alpha-tubulin.</text>
</comment>
<comment type="catalytic activity">
    <reaction evidence="2">
        <text>GTP + H2O = GDP + phosphate + H(+)</text>
        <dbReference type="Rhea" id="RHEA:19669"/>
        <dbReference type="ChEBI" id="CHEBI:15377"/>
        <dbReference type="ChEBI" id="CHEBI:15378"/>
        <dbReference type="ChEBI" id="CHEBI:37565"/>
        <dbReference type="ChEBI" id="CHEBI:43474"/>
        <dbReference type="ChEBI" id="CHEBI:58189"/>
    </reaction>
    <physiologicalReaction direction="left-to-right" evidence="2">
        <dbReference type="Rhea" id="RHEA:19670"/>
    </physiologicalReaction>
</comment>
<comment type="cofactor">
    <cofactor evidence="2">
        <name>Mg(2+)</name>
        <dbReference type="ChEBI" id="CHEBI:18420"/>
    </cofactor>
</comment>
<comment type="subunit">
    <text>Dimer of alpha and beta chains. A typical microtubule is a hollow water-filled tube with an outer diameter of 25 nm and an inner diameter of 15 nM. Alpha-beta heterodimers associate head-to-tail to form protofilaments running lengthwise along the microtubule wall with the beta-tubulin subunit facing the microtubule plus end conferring a structural polarity. Microtubules usually have 13 protofilaments but different protofilament numbers can be found in some organisms and specialized cells.</text>
</comment>
<comment type="subcellular location">
    <subcellularLocation>
        <location>Cytoplasm</location>
        <location>Cytoskeleton</location>
    </subcellularLocation>
</comment>
<comment type="similarity">
    <text evidence="4">Belongs to the tubulin family.</text>
</comment>
<keyword id="KW-0963">Cytoplasm</keyword>
<keyword id="KW-0206">Cytoskeleton</keyword>
<keyword id="KW-0342">GTP-binding</keyword>
<keyword id="KW-0378">Hydrolase</keyword>
<keyword id="KW-0460">Magnesium</keyword>
<keyword id="KW-0479">Metal-binding</keyword>
<keyword id="KW-0493">Microtubule</keyword>
<keyword id="KW-0547">Nucleotide-binding</keyword>
<gene>
    <name type="primary">TUB-1B</name>
</gene>
<name>TBAB_SCHCO</name>
<evidence type="ECO:0000250" key="1"/>
<evidence type="ECO:0000250" key="2">
    <source>
        <dbReference type="UniProtKB" id="P68363"/>
    </source>
</evidence>
<evidence type="ECO:0000256" key="3">
    <source>
        <dbReference type="SAM" id="MobiDB-lite"/>
    </source>
</evidence>
<evidence type="ECO:0000305" key="4"/>
<sequence>MREVISVHVGQAGVQIGNACWELYTLEHGLSPDGRLMDDSPSKHDSGSTFFSETGQGKHVPRRLYVDLEPGVIDDVKNGPYRSLFHPETMITGKEDAANNYARGHYTVGKELIDPVMDKLRRLADNCSGRQGLFVFHSFGGGTGSGFGALLLERLSTDYGKKAKLEFCVYPAPQLSSSVVEPYNSLLTTHTTLEHSDCSFMVDNEAIYDICKKNLGVAQPGFTNLNRLIAQVVSSITASLRFDGSLNVDLNEFQTNLVPFPRIHFPLASYAPLLSAPRRQHEQNSVEEMTFSCFESGNQMVKCDAKDGKYMACCLLYRGDVVPKDTQAAVASIKTKRTIQFVDWCPTGFKLGVCNEAPATVPGGDLAKVPRSLCMLSNTTAIAAAWNRLDYKFDLMYRKRAFVHWYVGEAMEEGEFSEAREDLAALEKDYEEVGTDSADAEEEGEY</sequence>
<feature type="chain" id="PRO_0000048224" description="Tubulin alpha-1B chain">
    <location>
        <begin position="1"/>
        <end position="446"/>
    </location>
</feature>
<feature type="region of interest" description="Disordered" evidence="3">
    <location>
        <begin position="34"/>
        <end position="55"/>
    </location>
</feature>
<feature type="compositionally biased region" description="Basic and acidic residues" evidence="3">
    <location>
        <begin position="35"/>
        <end position="46"/>
    </location>
</feature>
<feature type="active site" evidence="2">
    <location>
        <position position="252"/>
    </location>
</feature>
<feature type="binding site" evidence="2">
    <location>
        <position position="11"/>
    </location>
    <ligand>
        <name>GTP</name>
        <dbReference type="ChEBI" id="CHEBI:37565"/>
    </ligand>
</feature>
<feature type="binding site" evidence="2">
    <location>
        <position position="69"/>
    </location>
    <ligand>
        <name>GTP</name>
        <dbReference type="ChEBI" id="CHEBI:37565"/>
    </ligand>
</feature>
<feature type="binding site" evidence="2">
    <location>
        <position position="69"/>
    </location>
    <ligand>
        <name>Mg(2+)</name>
        <dbReference type="ChEBI" id="CHEBI:18420"/>
    </ligand>
</feature>
<feature type="binding site" evidence="2">
    <location>
        <position position="138"/>
    </location>
    <ligand>
        <name>GTP</name>
        <dbReference type="ChEBI" id="CHEBI:37565"/>
    </ligand>
</feature>
<feature type="binding site" evidence="2">
    <location>
        <position position="142"/>
    </location>
    <ligand>
        <name>GTP</name>
        <dbReference type="ChEBI" id="CHEBI:37565"/>
    </ligand>
</feature>
<feature type="binding site" evidence="2">
    <location>
        <position position="143"/>
    </location>
    <ligand>
        <name>GTP</name>
        <dbReference type="ChEBI" id="CHEBI:37565"/>
    </ligand>
</feature>
<feature type="binding site" evidence="2">
    <location>
        <position position="177"/>
    </location>
    <ligand>
        <name>GTP</name>
        <dbReference type="ChEBI" id="CHEBI:37565"/>
    </ligand>
</feature>
<feature type="binding site" evidence="2">
    <location>
        <position position="204"/>
    </location>
    <ligand>
        <name>GTP</name>
        <dbReference type="ChEBI" id="CHEBI:37565"/>
    </ligand>
</feature>
<feature type="binding site" evidence="2">
    <location>
        <position position="226"/>
    </location>
    <ligand>
        <name>GTP</name>
        <dbReference type="ChEBI" id="CHEBI:37565"/>
    </ligand>
</feature>
<feature type="site" description="Involved in polymerization" evidence="1">
    <location>
        <position position="446"/>
    </location>
</feature>
<proteinExistence type="inferred from homology"/>